<protein>
    <recommendedName>
        <fullName>Leucine-rich repeat and guanylate kinase domain-containing protein</fullName>
    </recommendedName>
</protein>
<feature type="chain" id="PRO_0000326408" description="Leucine-rich repeat and guanylate kinase domain-containing protein">
    <location>
        <begin position="1"/>
        <end position="825"/>
    </location>
</feature>
<feature type="repeat" description="LRR 1">
    <location>
        <begin position="129"/>
        <end position="149"/>
    </location>
</feature>
<feature type="repeat" description="LRR 2">
    <location>
        <begin position="150"/>
        <end position="171"/>
    </location>
</feature>
<feature type="repeat" description="LRR 3">
    <location>
        <begin position="172"/>
        <end position="193"/>
    </location>
</feature>
<feature type="repeat" description="LRR 4">
    <location>
        <begin position="194"/>
        <end position="215"/>
    </location>
</feature>
<feature type="repeat" description="LRR 5">
    <location>
        <begin position="216"/>
        <end position="237"/>
    </location>
</feature>
<feature type="repeat" description="LRR 6">
    <location>
        <begin position="238"/>
        <end position="259"/>
    </location>
</feature>
<feature type="repeat" description="LRR 7">
    <location>
        <begin position="260"/>
        <end position="280"/>
    </location>
</feature>
<feature type="repeat" description="LRR 8">
    <location>
        <begin position="281"/>
        <end position="302"/>
    </location>
</feature>
<feature type="repeat" description="LRR 9">
    <location>
        <begin position="303"/>
        <end position="324"/>
    </location>
</feature>
<feature type="domain" description="LRRCT">
    <location>
        <begin position="337"/>
        <end position="375"/>
    </location>
</feature>
<feature type="domain" description="Guanylate kinase-like" evidence="2">
    <location>
        <begin position="414"/>
        <end position="597"/>
    </location>
</feature>
<feature type="region of interest" description="Disordered" evidence="3">
    <location>
        <begin position="73"/>
        <end position="96"/>
    </location>
</feature>
<feature type="region of interest" description="Disordered" evidence="3">
    <location>
        <begin position="760"/>
        <end position="825"/>
    </location>
</feature>
<feature type="compositionally biased region" description="Polar residues" evidence="3">
    <location>
        <begin position="763"/>
        <end position="774"/>
    </location>
</feature>
<feature type="compositionally biased region" description="Pro residues" evidence="3">
    <location>
        <begin position="816"/>
        <end position="825"/>
    </location>
</feature>
<feature type="binding site" evidence="2">
    <location>
        <begin position="421"/>
        <end position="428"/>
    </location>
    <ligand>
        <name>ATP</name>
        <dbReference type="ChEBI" id="CHEBI:30616"/>
    </ligand>
</feature>
<feature type="sequence variant" id="VAR_040063" description="In dbSNP:rs17167553.">
    <original>D</original>
    <variation>Y</variation>
    <location>
        <position position="302"/>
    </location>
</feature>
<feature type="sequence variant" id="VAR_040064" description="In dbSNP:rs35149449.">
    <original>A</original>
    <variation>V</variation>
    <location>
        <position position="661"/>
    </location>
</feature>
<feature type="sequence conflict" description="In Ref. 4; AAI04900/AAI04898." evidence="4" ref="4">
    <original>P</original>
    <variation>L</variation>
    <location>
        <position position="606"/>
    </location>
</feature>
<accession>Q96M69</accession>
<accession>Q2M3I1</accession>
<reference key="1">
    <citation type="journal article" date="2004" name="Nat. Genet.">
        <title>Complete sequencing and characterization of 21,243 full-length human cDNAs.</title>
        <authorList>
            <person name="Ota T."/>
            <person name="Suzuki Y."/>
            <person name="Nishikawa T."/>
            <person name="Otsuki T."/>
            <person name="Sugiyama T."/>
            <person name="Irie R."/>
            <person name="Wakamatsu A."/>
            <person name="Hayashi K."/>
            <person name="Sato H."/>
            <person name="Nagai K."/>
            <person name="Kimura K."/>
            <person name="Makita H."/>
            <person name="Sekine M."/>
            <person name="Obayashi M."/>
            <person name="Nishi T."/>
            <person name="Shibahara T."/>
            <person name="Tanaka T."/>
            <person name="Ishii S."/>
            <person name="Yamamoto J."/>
            <person name="Saito K."/>
            <person name="Kawai Y."/>
            <person name="Isono Y."/>
            <person name="Nakamura Y."/>
            <person name="Nagahari K."/>
            <person name="Murakami K."/>
            <person name="Yasuda T."/>
            <person name="Iwayanagi T."/>
            <person name="Wagatsuma M."/>
            <person name="Shiratori A."/>
            <person name="Sudo H."/>
            <person name="Hosoiri T."/>
            <person name="Kaku Y."/>
            <person name="Kodaira H."/>
            <person name="Kondo H."/>
            <person name="Sugawara M."/>
            <person name="Takahashi M."/>
            <person name="Kanda K."/>
            <person name="Yokoi T."/>
            <person name="Furuya T."/>
            <person name="Kikkawa E."/>
            <person name="Omura Y."/>
            <person name="Abe K."/>
            <person name="Kamihara K."/>
            <person name="Katsuta N."/>
            <person name="Sato K."/>
            <person name="Tanikawa M."/>
            <person name="Yamazaki M."/>
            <person name="Ninomiya K."/>
            <person name="Ishibashi T."/>
            <person name="Yamashita H."/>
            <person name="Murakawa K."/>
            <person name="Fujimori K."/>
            <person name="Tanai H."/>
            <person name="Kimata M."/>
            <person name="Watanabe M."/>
            <person name="Hiraoka S."/>
            <person name="Chiba Y."/>
            <person name="Ishida S."/>
            <person name="Ono Y."/>
            <person name="Takiguchi S."/>
            <person name="Watanabe S."/>
            <person name="Yosida M."/>
            <person name="Hotuta T."/>
            <person name="Kusano J."/>
            <person name="Kanehori K."/>
            <person name="Takahashi-Fujii A."/>
            <person name="Hara H."/>
            <person name="Tanase T.-O."/>
            <person name="Nomura Y."/>
            <person name="Togiya S."/>
            <person name="Komai F."/>
            <person name="Hara R."/>
            <person name="Takeuchi K."/>
            <person name="Arita M."/>
            <person name="Imose N."/>
            <person name="Musashino K."/>
            <person name="Yuuki H."/>
            <person name="Oshima A."/>
            <person name="Sasaki N."/>
            <person name="Aotsuka S."/>
            <person name="Yoshikawa Y."/>
            <person name="Matsunawa H."/>
            <person name="Ichihara T."/>
            <person name="Shiohata N."/>
            <person name="Sano S."/>
            <person name="Moriya S."/>
            <person name="Momiyama H."/>
            <person name="Satoh N."/>
            <person name="Takami S."/>
            <person name="Terashima Y."/>
            <person name="Suzuki O."/>
            <person name="Nakagawa S."/>
            <person name="Senoh A."/>
            <person name="Mizoguchi H."/>
            <person name="Goto Y."/>
            <person name="Shimizu F."/>
            <person name="Wakebe H."/>
            <person name="Hishigaki H."/>
            <person name="Watanabe T."/>
            <person name="Sugiyama A."/>
            <person name="Takemoto M."/>
            <person name="Kawakami B."/>
            <person name="Yamazaki M."/>
            <person name="Watanabe K."/>
            <person name="Kumagai A."/>
            <person name="Itakura S."/>
            <person name="Fukuzumi Y."/>
            <person name="Fujimori Y."/>
            <person name="Komiyama M."/>
            <person name="Tashiro H."/>
            <person name="Tanigami A."/>
            <person name="Fujiwara T."/>
            <person name="Ono T."/>
            <person name="Yamada K."/>
            <person name="Fujii Y."/>
            <person name="Ozaki K."/>
            <person name="Hirao M."/>
            <person name="Ohmori Y."/>
            <person name="Kawabata A."/>
            <person name="Hikiji T."/>
            <person name="Kobatake N."/>
            <person name="Inagaki H."/>
            <person name="Ikema Y."/>
            <person name="Okamoto S."/>
            <person name="Okitani R."/>
            <person name="Kawakami T."/>
            <person name="Noguchi S."/>
            <person name="Itoh T."/>
            <person name="Shigeta K."/>
            <person name="Senba T."/>
            <person name="Matsumura K."/>
            <person name="Nakajima Y."/>
            <person name="Mizuno T."/>
            <person name="Morinaga M."/>
            <person name="Sasaki M."/>
            <person name="Togashi T."/>
            <person name="Oyama M."/>
            <person name="Hata H."/>
            <person name="Watanabe M."/>
            <person name="Komatsu T."/>
            <person name="Mizushima-Sugano J."/>
            <person name="Satoh T."/>
            <person name="Shirai Y."/>
            <person name="Takahashi Y."/>
            <person name="Nakagawa K."/>
            <person name="Okumura K."/>
            <person name="Nagase T."/>
            <person name="Nomura N."/>
            <person name="Kikuchi H."/>
            <person name="Masuho Y."/>
            <person name="Yamashita R."/>
            <person name="Nakai K."/>
            <person name="Yada T."/>
            <person name="Nakamura Y."/>
            <person name="Ohara O."/>
            <person name="Isogai T."/>
            <person name="Sugano S."/>
        </authorList>
    </citation>
    <scope>NUCLEOTIDE SEQUENCE [LARGE SCALE MRNA]</scope>
    <source>
        <tissue>Testis</tissue>
    </source>
</reference>
<reference key="2">
    <citation type="journal article" date="2003" name="Science">
        <title>Human chromosome 7: DNA sequence and biology.</title>
        <authorList>
            <person name="Scherer S.W."/>
            <person name="Cheung J."/>
            <person name="MacDonald J.R."/>
            <person name="Osborne L.R."/>
            <person name="Nakabayashi K."/>
            <person name="Herbrick J.-A."/>
            <person name="Carson A.R."/>
            <person name="Parker-Katiraee L."/>
            <person name="Skaug J."/>
            <person name="Khaja R."/>
            <person name="Zhang J."/>
            <person name="Hudek A.K."/>
            <person name="Li M."/>
            <person name="Haddad M."/>
            <person name="Duggan G.E."/>
            <person name="Fernandez B.A."/>
            <person name="Kanematsu E."/>
            <person name="Gentles S."/>
            <person name="Christopoulos C.C."/>
            <person name="Choufani S."/>
            <person name="Kwasnicka D."/>
            <person name="Zheng X.H."/>
            <person name="Lai Z."/>
            <person name="Nusskern D.R."/>
            <person name="Zhang Q."/>
            <person name="Gu Z."/>
            <person name="Lu F."/>
            <person name="Zeesman S."/>
            <person name="Nowaczyk M.J."/>
            <person name="Teshima I."/>
            <person name="Chitayat D."/>
            <person name="Shuman C."/>
            <person name="Weksberg R."/>
            <person name="Zackai E.H."/>
            <person name="Grebe T.A."/>
            <person name="Cox S.R."/>
            <person name="Kirkpatrick S.J."/>
            <person name="Rahman N."/>
            <person name="Friedman J.M."/>
            <person name="Heng H.H.Q."/>
            <person name="Pelicci P.G."/>
            <person name="Lo-Coco F."/>
            <person name="Belloni E."/>
            <person name="Shaffer L.G."/>
            <person name="Pober B."/>
            <person name="Morton C.C."/>
            <person name="Gusella J.F."/>
            <person name="Bruns G.A.P."/>
            <person name="Korf B.R."/>
            <person name="Quade B.J."/>
            <person name="Ligon A.H."/>
            <person name="Ferguson H."/>
            <person name="Higgins A.W."/>
            <person name="Leach N.T."/>
            <person name="Herrick S.R."/>
            <person name="Lemyre E."/>
            <person name="Farra C.G."/>
            <person name="Kim H.-G."/>
            <person name="Summers A.M."/>
            <person name="Gripp K.W."/>
            <person name="Roberts W."/>
            <person name="Szatmari P."/>
            <person name="Winsor E.J.T."/>
            <person name="Grzeschik K.-H."/>
            <person name="Teebi A."/>
            <person name="Minassian B.A."/>
            <person name="Kere J."/>
            <person name="Armengol L."/>
            <person name="Pujana M.A."/>
            <person name="Estivill X."/>
            <person name="Wilson M.D."/>
            <person name="Koop B.F."/>
            <person name="Tosi S."/>
            <person name="Moore G.E."/>
            <person name="Boright A.P."/>
            <person name="Zlotorynski E."/>
            <person name="Kerem B."/>
            <person name="Kroisel P.M."/>
            <person name="Petek E."/>
            <person name="Oscier D.G."/>
            <person name="Mould S.J."/>
            <person name="Doehner H."/>
            <person name="Doehner K."/>
            <person name="Rommens J.M."/>
            <person name="Vincent J.B."/>
            <person name="Venter J.C."/>
            <person name="Li P.W."/>
            <person name="Mural R.J."/>
            <person name="Adams M.D."/>
            <person name="Tsui L.-C."/>
        </authorList>
    </citation>
    <scope>NUCLEOTIDE SEQUENCE [LARGE SCALE GENOMIC DNA]</scope>
</reference>
<reference key="3">
    <citation type="submission" date="2005-07" db="EMBL/GenBank/DDBJ databases">
        <authorList>
            <person name="Mural R.J."/>
            <person name="Istrail S."/>
            <person name="Sutton G.G."/>
            <person name="Florea L."/>
            <person name="Halpern A.L."/>
            <person name="Mobarry C.M."/>
            <person name="Lippert R."/>
            <person name="Walenz B."/>
            <person name="Shatkay H."/>
            <person name="Dew I."/>
            <person name="Miller J.R."/>
            <person name="Flanigan M.J."/>
            <person name="Edwards N.J."/>
            <person name="Bolanos R."/>
            <person name="Fasulo D."/>
            <person name="Halldorsson B.V."/>
            <person name="Hannenhalli S."/>
            <person name="Turner R."/>
            <person name="Yooseph S."/>
            <person name="Lu F."/>
            <person name="Nusskern D.R."/>
            <person name="Shue B.C."/>
            <person name="Zheng X.H."/>
            <person name="Zhong F."/>
            <person name="Delcher A.L."/>
            <person name="Huson D.H."/>
            <person name="Kravitz S.A."/>
            <person name="Mouchard L."/>
            <person name="Reinert K."/>
            <person name="Remington K.A."/>
            <person name="Clark A.G."/>
            <person name="Waterman M.S."/>
            <person name="Eichler E.E."/>
            <person name="Adams M.D."/>
            <person name="Hunkapiller M.W."/>
            <person name="Myers E.W."/>
            <person name="Venter J.C."/>
        </authorList>
    </citation>
    <scope>NUCLEOTIDE SEQUENCE [LARGE SCALE GENOMIC DNA]</scope>
</reference>
<reference key="4">
    <citation type="journal article" date="2004" name="Genome Res.">
        <title>The status, quality, and expansion of the NIH full-length cDNA project: the Mammalian Gene Collection (MGC).</title>
        <authorList>
            <consortium name="The MGC Project Team"/>
        </authorList>
    </citation>
    <scope>NUCLEOTIDE SEQUENCE [LARGE SCALE MRNA]</scope>
    <source>
        <tissue>Brain cortex</tissue>
    </source>
</reference>
<keyword id="KW-0067">ATP-binding</keyword>
<keyword id="KW-0966">Cell projection</keyword>
<keyword id="KW-0963">Cytoplasm</keyword>
<keyword id="KW-0968">Cytoplasmic vesicle</keyword>
<keyword id="KW-0206">Cytoskeleton</keyword>
<keyword id="KW-0221">Differentiation</keyword>
<keyword id="KW-0418">Kinase</keyword>
<keyword id="KW-0433">Leucine-rich repeat</keyword>
<keyword id="KW-0547">Nucleotide-binding</keyword>
<keyword id="KW-1267">Proteomics identification</keyword>
<keyword id="KW-1185">Reference proteome</keyword>
<keyword id="KW-0677">Repeat</keyword>
<keyword id="KW-0744">Spermatogenesis</keyword>
<keyword id="KW-0808">Transferase</keyword>
<comment type="function">
    <text evidence="1">Involved in multiple aspects of sperm assembly including acrosome attachment, shaping of the sperm head and in the early aspects of axoneme development. Not essential for primary cilium biogenesis.</text>
</comment>
<comment type="subunit">
    <text evidence="1">Interacts (via guanylate kinase-like domain) with RIMBP3 (via coiled-coil region). Interacts (via guanylate kinase-like domain) with HOOK2. Interacts (via LRRCT domain) with KLC3. Interacts with HOOK1 and HOOK3.</text>
</comment>
<comment type="interaction">
    <interactant intactId="EBI-9478535">
        <id>Q96M69</id>
    </interactant>
    <interactant intactId="EBI-10961706">
        <id>Q96ED9-2</id>
        <label>HOOK2</label>
    </interactant>
    <organismsDiffer>false</organismsDiffer>
    <experiments>3</experiments>
</comment>
<comment type="subcellular location">
    <subcellularLocation>
        <location evidence="1">Cytoplasmic vesicle</location>
        <location evidence="1">Secretory vesicle</location>
        <location evidence="1">Acrosome</location>
    </subcellularLocation>
    <subcellularLocation>
        <location evidence="1">Cytoplasm</location>
        <location evidence="1">Cytoskeleton</location>
    </subcellularLocation>
    <subcellularLocation>
        <location evidence="1">Cytoplasm</location>
        <location evidence="1">Cytoskeleton</location>
        <location evidence="1">Cilium basal body</location>
    </subcellularLocation>
    <text evidence="1">Localizes to the acrosome and acroplaxome in round spermatids. Localizes to the manchette during spermiogenesis. Also found in the basal body of elongating spermatids, and in primary cilia of somatic cells.</text>
</comment>
<evidence type="ECO:0000250" key="1">
    <source>
        <dbReference type="UniProtKB" id="Q9D5S7"/>
    </source>
</evidence>
<evidence type="ECO:0000255" key="2">
    <source>
        <dbReference type="PROSITE-ProRule" id="PRU00100"/>
    </source>
</evidence>
<evidence type="ECO:0000256" key="3">
    <source>
        <dbReference type="SAM" id="MobiDB-lite"/>
    </source>
</evidence>
<evidence type="ECO:0000305" key="4"/>
<name>LRGUK_HUMAN</name>
<gene>
    <name type="primary">LRGUK</name>
</gene>
<sequence length="825" mass="93618">MATSERALLRTRAASLLRGLGRSRTGARSLQFRAEKERQPCWSFPMGQKTKGSSNIASSYLLQQLMHRYQELDSDGDEDQGEGEAGSEESSESEMLNLEEEFDGVLREEAVAKALHHLGRSGSGTEQVYLNLTLSGCNLIDVSILCGYVHLQKLDLSANKIEDLSCVSCMPYLLELNASQNNLTTFFNFKPPKNLKKADFSHNQISEICDLSAYHALTKLILDGNEIEEISGLEMCNNLIHLSLANNKITTINGLNKLPIKILCLSNNQIEMITGLEDLKALQNLDLSHNQISSLQGLENHDLLEVINLEDNKIAELREIEYIKNLPILRVLNLLENPIQEKSEYWFFVIFMLLRLTELDQKKIKVEEKVSAVNKYDPPPEVVAAQDHLTHVVNSVMQPQRIFDSTLPSLDAPYPMLILAGPEACGKRELAHRLCRQFSTYFRYGACHTTRPPYFGEGDRVDYHFISQDVFDEMVNMGKFILTFSYGNHKYGLNRDTVEGIARDGLASCIHMEIEGVRSLKYSYFEPRYILVVPMNKEKYEGYLRRKGLFSRAEIEFAVSRVDLYIKINQNFPGYFDEVINADDLDVAYQKLSQLIREYLGLTEEPAKSLATTADVKTSHLKPEAHPTKYISSNMGDFLHSTDRNYLIKFWAKLSAKKTPAERDSIHRQHEAARQALMGRIRPDHTLLFQRGPVPAPLTSGLHYYTTLEELWKSFDLCEDYFKPPFGPYPEKSGKDSLVSMKCSLFRFCPWSKELPFQPPEGSISSHLGSGASDSETEETRKALPIQSFSHEKESHQHRQHSVPVISRPGSNVKPTLPPIPQGRR</sequence>
<organism>
    <name type="scientific">Homo sapiens</name>
    <name type="common">Human</name>
    <dbReference type="NCBI Taxonomy" id="9606"/>
    <lineage>
        <taxon>Eukaryota</taxon>
        <taxon>Metazoa</taxon>
        <taxon>Chordata</taxon>
        <taxon>Craniata</taxon>
        <taxon>Vertebrata</taxon>
        <taxon>Euteleostomi</taxon>
        <taxon>Mammalia</taxon>
        <taxon>Eutheria</taxon>
        <taxon>Euarchontoglires</taxon>
        <taxon>Primates</taxon>
        <taxon>Haplorrhini</taxon>
        <taxon>Catarrhini</taxon>
        <taxon>Hominidae</taxon>
        <taxon>Homo</taxon>
    </lineage>
</organism>
<proteinExistence type="evidence at protein level"/>
<dbReference type="EMBL" id="AK057348">
    <property type="protein sequence ID" value="BAB71441.1"/>
    <property type="molecule type" value="mRNA"/>
</dbReference>
<dbReference type="EMBL" id="CH236950">
    <property type="protein sequence ID" value="EAL24072.1"/>
    <property type="molecule type" value="Genomic_DNA"/>
</dbReference>
<dbReference type="EMBL" id="CH471070">
    <property type="protein sequence ID" value="EAW83807.1"/>
    <property type="molecule type" value="Genomic_DNA"/>
</dbReference>
<dbReference type="EMBL" id="BC104897">
    <property type="protein sequence ID" value="AAI04898.1"/>
    <property type="molecule type" value="mRNA"/>
</dbReference>
<dbReference type="EMBL" id="BC104899">
    <property type="protein sequence ID" value="AAI04900.1"/>
    <property type="molecule type" value="mRNA"/>
</dbReference>
<dbReference type="CCDS" id="CCDS5830.1"/>
<dbReference type="RefSeq" id="NP_653249.1">
    <property type="nucleotide sequence ID" value="NM_144648.3"/>
</dbReference>
<dbReference type="SMR" id="Q96M69"/>
<dbReference type="BioGRID" id="126458">
    <property type="interactions" value="3"/>
</dbReference>
<dbReference type="CORUM" id="Q96M69"/>
<dbReference type="FunCoup" id="Q96M69">
    <property type="interactions" value="110"/>
</dbReference>
<dbReference type="IntAct" id="Q96M69">
    <property type="interactions" value="3"/>
</dbReference>
<dbReference type="STRING" id="9606.ENSP00000285928"/>
<dbReference type="GlyGen" id="Q96M69">
    <property type="glycosylation" value="1 site, 1 O-linked glycan (1 site)"/>
</dbReference>
<dbReference type="iPTMnet" id="Q96M69"/>
<dbReference type="PhosphoSitePlus" id="Q96M69"/>
<dbReference type="BioMuta" id="LRGUK"/>
<dbReference type="DMDM" id="74732316"/>
<dbReference type="jPOST" id="Q96M69"/>
<dbReference type="MassIVE" id="Q96M69"/>
<dbReference type="PaxDb" id="9606-ENSP00000285928"/>
<dbReference type="PeptideAtlas" id="Q96M69"/>
<dbReference type="ProteomicsDB" id="77304"/>
<dbReference type="Antibodypedia" id="18051">
    <property type="antibodies" value="59 antibodies from 16 providers"/>
</dbReference>
<dbReference type="DNASU" id="136332"/>
<dbReference type="Ensembl" id="ENST00000285928.3">
    <property type="protein sequence ID" value="ENSP00000285928.2"/>
    <property type="gene ID" value="ENSG00000155530.4"/>
</dbReference>
<dbReference type="GeneID" id="136332"/>
<dbReference type="KEGG" id="hsa:136332"/>
<dbReference type="MANE-Select" id="ENST00000285928.3">
    <property type="protein sequence ID" value="ENSP00000285928.2"/>
    <property type="RefSeq nucleotide sequence ID" value="NM_144648.3"/>
    <property type="RefSeq protein sequence ID" value="NP_653249.1"/>
</dbReference>
<dbReference type="UCSC" id="uc003vrm.2">
    <property type="organism name" value="human"/>
</dbReference>
<dbReference type="AGR" id="HGNC:21964"/>
<dbReference type="CTD" id="136332"/>
<dbReference type="DisGeNET" id="136332"/>
<dbReference type="GeneCards" id="LRGUK"/>
<dbReference type="HGNC" id="HGNC:21964">
    <property type="gene designation" value="LRGUK"/>
</dbReference>
<dbReference type="HPA" id="ENSG00000155530">
    <property type="expression patterns" value="Tissue enhanced (choroid plexus, fallopian tube, testis)"/>
</dbReference>
<dbReference type="MIM" id="616478">
    <property type="type" value="gene"/>
</dbReference>
<dbReference type="neXtProt" id="NX_Q96M69"/>
<dbReference type="OpenTargets" id="ENSG00000155530"/>
<dbReference type="PharmGKB" id="PA162394330"/>
<dbReference type="VEuPathDB" id="HostDB:ENSG00000155530"/>
<dbReference type="eggNOG" id="KOG0531">
    <property type="taxonomic scope" value="Eukaryota"/>
</dbReference>
<dbReference type="eggNOG" id="KOG0707">
    <property type="taxonomic scope" value="Eukaryota"/>
</dbReference>
<dbReference type="GeneTree" id="ENSGT00940000157992"/>
<dbReference type="HOGENOM" id="CLU_019293_0_0_1"/>
<dbReference type="InParanoid" id="Q96M69"/>
<dbReference type="OMA" id="CNQISEM"/>
<dbReference type="OrthoDB" id="6334211at2759"/>
<dbReference type="PAN-GO" id="Q96M69">
    <property type="GO annotations" value="2 GO annotations based on evolutionary models"/>
</dbReference>
<dbReference type="PhylomeDB" id="Q96M69"/>
<dbReference type="TreeFam" id="TF329158"/>
<dbReference type="PathwayCommons" id="Q96M69"/>
<dbReference type="SignaLink" id="Q96M69"/>
<dbReference type="BioGRID-ORCS" id="136332">
    <property type="hits" value="9 hits in 1142 CRISPR screens"/>
</dbReference>
<dbReference type="ChiTaRS" id="LRGUK">
    <property type="organism name" value="human"/>
</dbReference>
<dbReference type="GenomeRNAi" id="136332"/>
<dbReference type="Pharos" id="Q96M69">
    <property type="development level" value="Tdark"/>
</dbReference>
<dbReference type="PRO" id="PR:Q96M69"/>
<dbReference type="Proteomes" id="UP000005640">
    <property type="component" value="Chromosome 7"/>
</dbReference>
<dbReference type="RNAct" id="Q96M69">
    <property type="molecule type" value="protein"/>
</dbReference>
<dbReference type="Bgee" id="ENSG00000155530">
    <property type="expression patterns" value="Expressed in bronchial epithelial cell and 106 other cell types or tissues"/>
</dbReference>
<dbReference type="ExpressionAtlas" id="Q96M69">
    <property type="expression patterns" value="baseline and differential"/>
</dbReference>
<dbReference type="GO" id="GO:0001669">
    <property type="term" value="C:acrosomal vesicle"/>
    <property type="evidence" value="ECO:0000250"/>
    <property type="project" value="UniProtKB"/>
</dbReference>
<dbReference type="GO" id="GO:0042995">
    <property type="term" value="C:cell projection"/>
    <property type="evidence" value="ECO:0007669"/>
    <property type="project" value="UniProtKB-KW"/>
</dbReference>
<dbReference type="GO" id="GO:0005829">
    <property type="term" value="C:cytosol"/>
    <property type="evidence" value="ECO:0000318"/>
    <property type="project" value="GO_Central"/>
</dbReference>
<dbReference type="GO" id="GO:0002177">
    <property type="term" value="C:manchette"/>
    <property type="evidence" value="ECO:0000250"/>
    <property type="project" value="UniProtKB"/>
</dbReference>
<dbReference type="GO" id="GO:0005524">
    <property type="term" value="F:ATP binding"/>
    <property type="evidence" value="ECO:0007669"/>
    <property type="project" value="UniProtKB-KW"/>
</dbReference>
<dbReference type="GO" id="GO:0004385">
    <property type="term" value="F:guanylate kinase activity"/>
    <property type="evidence" value="ECO:0000318"/>
    <property type="project" value="GO_Central"/>
</dbReference>
<dbReference type="GO" id="GO:0035082">
    <property type="term" value="P:axoneme assembly"/>
    <property type="evidence" value="ECO:0000250"/>
    <property type="project" value="UniProtKB"/>
</dbReference>
<dbReference type="GO" id="GO:0030154">
    <property type="term" value="P:cell differentiation"/>
    <property type="evidence" value="ECO:0007669"/>
    <property type="project" value="UniProtKB-KW"/>
</dbReference>
<dbReference type="GO" id="GO:0007283">
    <property type="term" value="P:spermatogenesis"/>
    <property type="evidence" value="ECO:0000250"/>
    <property type="project" value="UniProtKB"/>
</dbReference>
<dbReference type="CDD" id="cd00071">
    <property type="entry name" value="GMPK"/>
    <property type="match status" value="1"/>
</dbReference>
<dbReference type="FunFam" id="3.80.10.10:FF:000191">
    <property type="entry name" value="Leucine rich repeats and guanylate kinase domain containing"/>
    <property type="match status" value="1"/>
</dbReference>
<dbReference type="FunFam" id="3.80.10.10:FF:000238">
    <property type="entry name" value="Leucine rich repeats and guanylate kinase domain containing"/>
    <property type="match status" value="1"/>
</dbReference>
<dbReference type="FunFam" id="3.40.50.300:FF:000828">
    <property type="entry name" value="leucine-rich repeat and guanylate kinase domain-containing protein-like"/>
    <property type="match status" value="1"/>
</dbReference>
<dbReference type="Gene3D" id="3.40.50.300">
    <property type="entry name" value="P-loop containing nucleotide triphosphate hydrolases"/>
    <property type="match status" value="1"/>
</dbReference>
<dbReference type="Gene3D" id="3.80.10.10">
    <property type="entry name" value="Ribonuclease Inhibitor"/>
    <property type="match status" value="2"/>
</dbReference>
<dbReference type="InterPro" id="IPR008145">
    <property type="entry name" value="GK/Ca_channel_bsu"/>
</dbReference>
<dbReference type="InterPro" id="IPR008144">
    <property type="entry name" value="Guanylate_kin-like_dom"/>
</dbReference>
<dbReference type="InterPro" id="IPR001611">
    <property type="entry name" value="Leu-rich_rpt"/>
</dbReference>
<dbReference type="InterPro" id="IPR025875">
    <property type="entry name" value="Leu-rich_rpt_4"/>
</dbReference>
<dbReference type="InterPro" id="IPR032675">
    <property type="entry name" value="LRR_dom_sf"/>
</dbReference>
<dbReference type="InterPro" id="IPR027417">
    <property type="entry name" value="P-loop_NTPase"/>
</dbReference>
<dbReference type="PANTHER" id="PTHR23117">
    <property type="entry name" value="GUANYLATE KINASE-RELATED"/>
    <property type="match status" value="1"/>
</dbReference>
<dbReference type="PANTHER" id="PTHR23117:SF18">
    <property type="entry name" value="LEUCINE-RICH REPEAT AND GUANYLATE KINASE DOMAIN-CONTAINING PROTEIN"/>
    <property type="match status" value="1"/>
</dbReference>
<dbReference type="Pfam" id="PF00625">
    <property type="entry name" value="Guanylate_kin"/>
    <property type="match status" value="1"/>
</dbReference>
<dbReference type="Pfam" id="PF12799">
    <property type="entry name" value="LRR_4"/>
    <property type="match status" value="1"/>
</dbReference>
<dbReference type="Pfam" id="PF14580">
    <property type="entry name" value="LRR_9"/>
    <property type="match status" value="1"/>
</dbReference>
<dbReference type="SMART" id="SM00072">
    <property type="entry name" value="GuKc"/>
    <property type="match status" value="1"/>
</dbReference>
<dbReference type="SMART" id="SM00365">
    <property type="entry name" value="LRR_SD22"/>
    <property type="match status" value="7"/>
</dbReference>
<dbReference type="SUPFAM" id="SSF52058">
    <property type="entry name" value="L domain-like"/>
    <property type="match status" value="1"/>
</dbReference>
<dbReference type="SUPFAM" id="SSF52540">
    <property type="entry name" value="P-loop containing nucleoside triphosphate hydrolases"/>
    <property type="match status" value="1"/>
</dbReference>
<dbReference type="PROSITE" id="PS50052">
    <property type="entry name" value="GUANYLATE_KINASE_2"/>
    <property type="match status" value="1"/>
</dbReference>
<dbReference type="PROSITE" id="PS51450">
    <property type="entry name" value="LRR"/>
    <property type="match status" value="9"/>
</dbReference>